<sequence>MSSIVAIKGFNDVLPTQTAAWRRLEQHLASLMDAYGYQQIRLPIVEQTGLFKRAIGDATDIVEKEMYTFFDKGNPPESLTLRPEGTAGCVRALVEHNLLRGATPRVWYMGPMFRYEKPQKGRYRQFHQFGVETFGVATPDIDAELIMLTARLWKRMGVDHMVQLELNTLGETDERTEYRNALVAFLNEHKDALDEDSQRRLTTNPLRILDSKIESTQKILENAPKLHDFLKEDSLSHFQQLQDYLTAAGIKFVINQKLVRGLDYYNKTVFEWTTTALGSQGTVCAGGRYDGLVGQLKGKADQSVPAVGFAMGMERLLLLLEQVEQAEIVRHCEAFLVAEPAYQSKALVLAEQLRDQLEAANSNIRIKTGSQSSMKSQMKKADQAGAVYAIILGEREWEAQQLAVKELATAEQSQVALAELVPFLIEKFTK</sequence>
<feature type="chain" id="PRO_1000095523" description="Histidine--tRNA ligase">
    <location>
        <begin position="1"/>
        <end position="430"/>
    </location>
</feature>
<feature type="turn" evidence="2">
    <location>
        <begin position="15"/>
        <end position="17"/>
    </location>
</feature>
<feature type="helix" evidence="2">
    <location>
        <begin position="18"/>
        <end position="33"/>
    </location>
</feature>
<feature type="turn" evidence="2">
    <location>
        <begin position="34"/>
        <end position="36"/>
    </location>
</feature>
<feature type="strand" evidence="2">
    <location>
        <begin position="44"/>
        <end position="47"/>
    </location>
</feature>
<feature type="helix" evidence="2">
    <location>
        <begin position="48"/>
        <end position="55"/>
    </location>
</feature>
<feature type="helix" evidence="2">
    <location>
        <begin position="60"/>
        <end position="64"/>
    </location>
</feature>
<feature type="strand" evidence="2">
    <location>
        <begin position="68"/>
        <end position="70"/>
    </location>
</feature>
<feature type="strand" evidence="2">
    <location>
        <begin position="78"/>
        <end position="81"/>
    </location>
</feature>
<feature type="helix" evidence="2">
    <location>
        <begin position="86"/>
        <end position="95"/>
    </location>
</feature>
<feature type="strand" evidence="2">
    <location>
        <begin position="105"/>
        <end position="113"/>
    </location>
</feature>
<feature type="strand" evidence="2">
    <location>
        <begin position="124"/>
        <end position="135"/>
    </location>
</feature>
<feature type="helix" evidence="2">
    <location>
        <begin position="139"/>
        <end position="155"/>
    </location>
</feature>
<feature type="helix" evidence="2">
    <location>
        <begin position="159"/>
        <end position="161"/>
    </location>
</feature>
<feature type="strand" evidence="2">
    <location>
        <begin position="163"/>
        <end position="168"/>
    </location>
</feature>
<feature type="helix" evidence="2">
    <location>
        <begin position="172"/>
        <end position="180"/>
    </location>
</feature>
<feature type="helix" evidence="2">
    <location>
        <begin position="182"/>
        <end position="185"/>
    </location>
</feature>
<feature type="strand" evidence="2">
    <location>
        <begin position="220"/>
        <end position="222"/>
    </location>
</feature>
<feature type="helix" evidence="2">
    <location>
        <begin position="226"/>
        <end position="229"/>
    </location>
</feature>
<feature type="helix" evidence="2">
    <location>
        <begin position="232"/>
        <end position="247"/>
    </location>
</feature>
<feature type="strand" evidence="2">
    <location>
        <begin position="266"/>
        <end position="273"/>
    </location>
</feature>
<feature type="turn" evidence="2">
    <location>
        <begin position="276"/>
        <end position="279"/>
    </location>
</feature>
<feature type="strand" evidence="2">
    <location>
        <begin position="282"/>
        <end position="288"/>
    </location>
</feature>
<feature type="helix" evidence="2">
    <location>
        <begin position="292"/>
        <end position="297"/>
    </location>
</feature>
<feature type="helix" evidence="2">
    <location>
        <begin position="300"/>
        <end position="302"/>
    </location>
</feature>
<feature type="strand" evidence="2">
    <location>
        <begin position="306"/>
        <end position="312"/>
    </location>
</feature>
<feature type="helix" evidence="2">
    <location>
        <begin position="313"/>
        <end position="321"/>
    </location>
</feature>
<feature type="strand" evidence="2">
    <location>
        <begin position="333"/>
        <end position="338"/>
    </location>
</feature>
<feature type="helix" evidence="2">
    <location>
        <begin position="340"/>
        <end position="342"/>
    </location>
</feature>
<feature type="helix" evidence="2">
    <location>
        <begin position="343"/>
        <end position="359"/>
    </location>
</feature>
<feature type="strand" evidence="2">
    <location>
        <begin position="366"/>
        <end position="368"/>
    </location>
</feature>
<feature type="helix" evidence="2">
    <location>
        <begin position="374"/>
        <end position="383"/>
    </location>
</feature>
<feature type="strand" evidence="2">
    <location>
        <begin position="387"/>
        <end position="392"/>
    </location>
</feature>
<feature type="helix" evidence="2">
    <location>
        <begin position="394"/>
        <end position="399"/>
    </location>
</feature>
<feature type="strand" evidence="2">
    <location>
        <begin position="401"/>
        <end position="406"/>
    </location>
</feature>
<feature type="turn" evidence="2">
    <location>
        <begin position="407"/>
        <end position="410"/>
    </location>
</feature>
<feature type="strand" evidence="2">
    <location>
        <begin position="411"/>
        <end position="416"/>
    </location>
</feature>
<feature type="helix" evidence="2">
    <location>
        <begin position="417"/>
        <end position="419"/>
    </location>
</feature>
<feature type="helix" evidence="2">
    <location>
        <begin position="420"/>
        <end position="427"/>
    </location>
</feature>
<comment type="catalytic activity">
    <reaction evidence="1">
        <text>tRNA(His) + L-histidine + ATP = L-histidyl-tRNA(His) + AMP + diphosphate + H(+)</text>
        <dbReference type="Rhea" id="RHEA:17313"/>
        <dbReference type="Rhea" id="RHEA-COMP:9665"/>
        <dbReference type="Rhea" id="RHEA-COMP:9689"/>
        <dbReference type="ChEBI" id="CHEBI:15378"/>
        <dbReference type="ChEBI" id="CHEBI:30616"/>
        <dbReference type="ChEBI" id="CHEBI:33019"/>
        <dbReference type="ChEBI" id="CHEBI:57595"/>
        <dbReference type="ChEBI" id="CHEBI:78442"/>
        <dbReference type="ChEBI" id="CHEBI:78527"/>
        <dbReference type="ChEBI" id="CHEBI:456215"/>
        <dbReference type="EC" id="6.1.1.21"/>
    </reaction>
</comment>
<comment type="subunit">
    <text evidence="1">Homodimer.</text>
</comment>
<comment type="subcellular location">
    <subcellularLocation>
        <location evidence="1">Cytoplasm</location>
    </subcellularLocation>
</comment>
<comment type="similarity">
    <text evidence="1">Belongs to the class-II aminoacyl-tRNA synthetase family.</text>
</comment>
<protein>
    <recommendedName>
        <fullName evidence="1">Histidine--tRNA ligase</fullName>
        <ecNumber evidence="1">6.1.1.21</ecNumber>
    </recommendedName>
    <alternativeName>
        <fullName evidence="1">Histidyl-tRNA synthetase</fullName>
        <shortName evidence="1">HisRS</shortName>
    </alternativeName>
</protein>
<dbReference type="EC" id="6.1.1.21" evidence="1"/>
<dbReference type="EMBL" id="CU468230">
    <property type="protein sequence ID" value="CAP02286.1"/>
    <property type="molecule type" value="Genomic_DNA"/>
</dbReference>
<dbReference type="PDB" id="5E3I">
    <property type="method" value="X-ray"/>
    <property type="resolution" value="2.20 A"/>
    <property type="chains" value="A/B=1-430"/>
</dbReference>
<dbReference type="PDBsum" id="5E3I"/>
<dbReference type="SMR" id="B0VKR7"/>
<dbReference type="KEGG" id="abm:ABSDF3000"/>
<dbReference type="HOGENOM" id="CLU_025113_1_0_6"/>
<dbReference type="EvolutionaryTrace" id="B0VKR7"/>
<dbReference type="Proteomes" id="UP000001741">
    <property type="component" value="Chromosome"/>
</dbReference>
<dbReference type="GO" id="GO:0005737">
    <property type="term" value="C:cytoplasm"/>
    <property type="evidence" value="ECO:0007669"/>
    <property type="project" value="UniProtKB-SubCell"/>
</dbReference>
<dbReference type="GO" id="GO:0005524">
    <property type="term" value="F:ATP binding"/>
    <property type="evidence" value="ECO:0007669"/>
    <property type="project" value="UniProtKB-UniRule"/>
</dbReference>
<dbReference type="GO" id="GO:0004821">
    <property type="term" value="F:histidine-tRNA ligase activity"/>
    <property type="evidence" value="ECO:0007669"/>
    <property type="project" value="UniProtKB-UniRule"/>
</dbReference>
<dbReference type="GO" id="GO:0006427">
    <property type="term" value="P:histidyl-tRNA aminoacylation"/>
    <property type="evidence" value="ECO:0007669"/>
    <property type="project" value="UniProtKB-UniRule"/>
</dbReference>
<dbReference type="CDD" id="cd00773">
    <property type="entry name" value="HisRS-like_core"/>
    <property type="match status" value="1"/>
</dbReference>
<dbReference type="FunFam" id="3.30.930.10:FF:000005">
    <property type="entry name" value="Histidine--tRNA ligase"/>
    <property type="match status" value="1"/>
</dbReference>
<dbReference type="Gene3D" id="3.40.50.800">
    <property type="entry name" value="Anticodon-binding domain"/>
    <property type="match status" value="1"/>
</dbReference>
<dbReference type="Gene3D" id="3.30.930.10">
    <property type="entry name" value="Bira Bifunctional Protein, Domain 2"/>
    <property type="match status" value="1"/>
</dbReference>
<dbReference type="HAMAP" id="MF_00127">
    <property type="entry name" value="His_tRNA_synth"/>
    <property type="match status" value="1"/>
</dbReference>
<dbReference type="InterPro" id="IPR006195">
    <property type="entry name" value="aa-tRNA-synth_II"/>
</dbReference>
<dbReference type="InterPro" id="IPR045864">
    <property type="entry name" value="aa-tRNA-synth_II/BPL/LPL"/>
</dbReference>
<dbReference type="InterPro" id="IPR004154">
    <property type="entry name" value="Anticodon-bd"/>
</dbReference>
<dbReference type="InterPro" id="IPR036621">
    <property type="entry name" value="Anticodon-bd_dom_sf"/>
</dbReference>
<dbReference type="InterPro" id="IPR015807">
    <property type="entry name" value="His-tRNA-ligase"/>
</dbReference>
<dbReference type="InterPro" id="IPR041715">
    <property type="entry name" value="HisRS-like_core"/>
</dbReference>
<dbReference type="InterPro" id="IPR004516">
    <property type="entry name" value="HisRS/HisZ"/>
</dbReference>
<dbReference type="NCBIfam" id="TIGR00442">
    <property type="entry name" value="hisS"/>
    <property type="match status" value="1"/>
</dbReference>
<dbReference type="PANTHER" id="PTHR43707:SF1">
    <property type="entry name" value="HISTIDINE--TRNA LIGASE, MITOCHONDRIAL-RELATED"/>
    <property type="match status" value="1"/>
</dbReference>
<dbReference type="PANTHER" id="PTHR43707">
    <property type="entry name" value="HISTIDYL-TRNA SYNTHETASE"/>
    <property type="match status" value="1"/>
</dbReference>
<dbReference type="Pfam" id="PF03129">
    <property type="entry name" value="HGTP_anticodon"/>
    <property type="match status" value="1"/>
</dbReference>
<dbReference type="Pfam" id="PF13393">
    <property type="entry name" value="tRNA-synt_His"/>
    <property type="match status" value="1"/>
</dbReference>
<dbReference type="PIRSF" id="PIRSF001549">
    <property type="entry name" value="His-tRNA_synth"/>
    <property type="match status" value="1"/>
</dbReference>
<dbReference type="SUPFAM" id="SSF52954">
    <property type="entry name" value="Class II aaRS ABD-related"/>
    <property type="match status" value="1"/>
</dbReference>
<dbReference type="SUPFAM" id="SSF55681">
    <property type="entry name" value="Class II aaRS and biotin synthetases"/>
    <property type="match status" value="1"/>
</dbReference>
<dbReference type="PROSITE" id="PS50862">
    <property type="entry name" value="AA_TRNA_LIGASE_II"/>
    <property type="match status" value="1"/>
</dbReference>
<gene>
    <name evidence="1" type="primary">hisS</name>
    <name type="ordered locus">ABSDF3000</name>
</gene>
<accession>B0VKR7</accession>
<name>SYH_ACIBS</name>
<reference key="1">
    <citation type="journal article" date="2008" name="PLoS ONE">
        <title>Comparative analysis of Acinetobacters: three genomes for three lifestyles.</title>
        <authorList>
            <person name="Vallenet D."/>
            <person name="Nordmann P."/>
            <person name="Barbe V."/>
            <person name="Poirel L."/>
            <person name="Mangenot S."/>
            <person name="Bataille E."/>
            <person name="Dossat C."/>
            <person name="Gas S."/>
            <person name="Kreimeyer A."/>
            <person name="Lenoble P."/>
            <person name="Oztas S."/>
            <person name="Poulain J."/>
            <person name="Segurens B."/>
            <person name="Robert C."/>
            <person name="Abergel C."/>
            <person name="Claverie J.-M."/>
            <person name="Raoult D."/>
            <person name="Medigue C."/>
            <person name="Weissenbach J."/>
            <person name="Cruveiller S."/>
        </authorList>
    </citation>
    <scope>NUCLEOTIDE SEQUENCE [LARGE SCALE GENOMIC DNA]</scope>
    <source>
        <strain>SDF</strain>
    </source>
</reference>
<evidence type="ECO:0000255" key="1">
    <source>
        <dbReference type="HAMAP-Rule" id="MF_00127"/>
    </source>
</evidence>
<evidence type="ECO:0007829" key="2">
    <source>
        <dbReference type="PDB" id="5E3I"/>
    </source>
</evidence>
<proteinExistence type="evidence at protein level"/>
<organism>
    <name type="scientific">Acinetobacter baumannii (strain SDF)</name>
    <dbReference type="NCBI Taxonomy" id="509170"/>
    <lineage>
        <taxon>Bacteria</taxon>
        <taxon>Pseudomonadati</taxon>
        <taxon>Pseudomonadota</taxon>
        <taxon>Gammaproteobacteria</taxon>
        <taxon>Moraxellales</taxon>
        <taxon>Moraxellaceae</taxon>
        <taxon>Acinetobacter</taxon>
        <taxon>Acinetobacter calcoaceticus/baumannii complex</taxon>
    </lineage>
</organism>
<keyword id="KW-0002">3D-structure</keyword>
<keyword id="KW-0030">Aminoacyl-tRNA synthetase</keyword>
<keyword id="KW-0067">ATP-binding</keyword>
<keyword id="KW-0963">Cytoplasm</keyword>
<keyword id="KW-0436">Ligase</keyword>
<keyword id="KW-0547">Nucleotide-binding</keyword>
<keyword id="KW-0648">Protein biosynthesis</keyword>